<organism>
    <name type="scientific">Leptospira interrogans serogroup Icterohaemorrhagiae serovar copenhageni (strain Fiocruz L1-130)</name>
    <dbReference type="NCBI Taxonomy" id="267671"/>
    <lineage>
        <taxon>Bacteria</taxon>
        <taxon>Pseudomonadati</taxon>
        <taxon>Spirochaetota</taxon>
        <taxon>Spirochaetia</taxon>
        <taxon>Leptospirales</taxon>
        <taxon>Leptospiraceae</taxon>
        <taxon>Leptospira</taxon>
    </lineage>
</organism>
<keyword id="KW-0066">ATP synthesis</keyword>
<keyword id="KW-0997">Cell inner membrane</keyword>
<keyword id="KW-1003">Cell membrane</keyword>
<keyword id="KW-0138">CF(0)</keyword>
<keyword id="KW-0375">Hydrogen ion transport</keyword>
<keyword id="KW-0406">Ion transport</keyword>
<keyword id="KW-0472">Membrane</keyword>
<keyword id="KW-0812">Transmembrane</keyword>
<keyword id="KW-1133">Transmembrane helix</keyword>
<keyword id="KW-0813">Transport</keyword>
<name>ATPF_LEPIC</name>
<evidence type="ECO:0000255" key="1">
    <source>
        <dbReference type="HAMAP-Rule" id="MF_01398"/>
    </source>
</evidence>
<proteinExistence type="inferred from homology"/>
<comment type="function">
    <text evidence="1">F(1)F(0) ATP synthase produces ATP from ADP in the presence of a proton or sodium gradient. F-type ATPases consist of two structural domains, F(1) containing the extramembraneous catalytic core and F(0) containing the membrane proton channel, linked together by a central stalk and a peripheral stalk. During catalysis, ATP synthesis in the catalytic domain of F(1) is coupled via a rotary mechanism of the central stalk subunits to proton translocation.</text>
</comment>
<comment type="function">
    <text evidence="1">Component of the F(0) channel, it forms part of the peripheral stalk, linking F(1) to F(0).</text>
</comment>
<comment type="subunit">
    <text evidence="1">F-type ATPases have 2 components, F(1) - the catalytic core - and F(0) - the membrane proton channel. F(1) has five subunits: alpha(3), beta(3), gamma(1), delta(1), epsilon(1). F(0) has three main subunits: a(1), b(2) and c(10-14). The alpha and beta chains form an alternating ring which encloses part of the gamma chain. F(1) is attached to F(0) by a central stalk formed by the gamma and epsilon chains, while a peripheral stalk is formed by the delta and b chains.</text>
</comment>
<comment type="subcellular location">
    <subcellularLocation>
        <location evidence="1">Cell inner membrane</location>
        <topology evidence="1">Single-pass membrane protein</topology>
    </subcellularLocation>
</comment>
<comment type="similarity">
    <text evidence="1">Belongs to the ATPase B chain family.</text>
</comment>
<dbReference type="EMBL" id="AE016823">
    <property type="protein sequence ID" value="AAS69845.1"/>
    <property type="molecule type" value="Genomic_DNA"/>
</dbReference>
<dbReference type="RefSeq" id="WP_000243426.1">
    <property type="nucleotide sequence ID" value="NC_005823.1"/>
</dbReference>
<dbReference type="SMR" id="Q72SY3"/>
<dbReference type="KEGG" id="lic:LIC_11239"/>
<dbReference type="HOGENOM" id="CLU_079215_4_1_12"/>
<dbReference type="Proteomes" id="UP000007037">
    <property type="component" value="Chromosome I"/>
</dbReference>
<dbReference type="GO" id="GO:0005886">
    <property type="term" value="C:plasma membrane"/>
    <property type="evidence" value="ECO:0007669"/>
    <property type="project" value="UniProtKB-SubCell"/>
</dbReference>
<dbReference type="GO" id="GO:0045259">
    <property type="term" value="C:proton-transporting ATP synthase complex"/>
    <property type="evidence" value="ECO:0007669"/>
    <property type="project" value="UniProtKB-KW"/>
</dbReference>
<dbReference type="GO" id="GO:0046933">
    <property type="term" value="F:proton-transporting ATP synthase activity, rotational mechanism"/>
    <property type="evidence" value="ECO:0007669"/>
    <property type="project" value="UniProtKB-UniRule"/>
</dbReference>
<dbReference type="GO" id="GO:0046961">
    <property type="term" value="F:proton-transporting ATPase activity, rotational mechanism"/>
    <property type="evidence" value="ECO:0007669"/>
    <property type="project" value="TreeGrafter"/>
</dbReference>
<dbReference type="CDD" id="cd06503">
    <property type="entry name" value="ATP-synt_Fo_b"/>
    <property type="match status" value="1"/>
</dbReference>
<dbReference type="HAMAP" id="MF_01398">
    <property type="entry name" value="ATP_synth_b_bprime"/>
    <property type="match status" value="1"/>
</dbReference>
<dbReference type="InterPro" id="IPR002146">
    <property type="entry name" value="ATP_synth_b/b'su_bac/chlpt"/>
</dbReference>
<dbReference type="InterPro" id="IPR005864">
    <property type="entry name" value="ATP_synth_F0_bsu_bac"/>
</dbReference>
<dbReference type="InterPro" id="IPR050059">
    <property type="entry name" value="ATP_synthase_B_chain"/>
</dbReference>
<dbReference type="NCBIfam" id="TIGR01144">
    <property type="entry name" value="ATP_synt_b"/>
    <property type="match status" value="1"/>
</dbReference>
<dbReference type="NCBIfam" id="NF009991">
    <property type="entry name" value="PRK13460.1"/>
    <property type="match status" value="1"/>
</dbReference>
<dbReference type="PANTHER" id="PTHR33445:SF1">
    <property type="entry name" value="ATP SYNTHASE SUBUNIT B"/>
    <property type="match status" value="1"/>
</dbReference>
<dbReference type="PANTHER" id="PTHR33445">
    <property type="entry name" value="ATP SYNTHASE SUBUNIT B', CHLOROPLASTIC"/>
    <property type="match status" value="1"/>
</dbReference>
<dbReference type="Pfam" id="PF00430">
    <property type="entry name" value="ATP-synt_B"/>
    <property type="match status" value="1"/>
</dbReference>
<reference key="1">
    <citation type="journal article" date="2004" name="J. Bacteriol.">
        <title>Comparative genomics of two Leptospira interrogans serovars reveals novel insights into physiology and pathogenesis.</title>
        <authorList>
            <person name="Nascimento A.L.T.O."/>
            <person name="Ko A.I."/>
            <person name="Martins E.A.L."/>
            <person name="Monteiro-Vitorello C.B."/>
            <person name="Ho P.L."/>
            <person name="Haake D.A."/>
            <person name="Verjovski-Almeida S."/>
            <person name="Hartskeerl R.A."/>
            <person name="Marques M.V."/>
            <person name="Oliveira M.C."/>
            <person name="Menck C.F.M."/>
            <person name="Leite L.C.C."/>
            <person name="Carrer H."/>
            <person name="Coutinho L.L."/>
            <person name="Degrave W.M."/>
            <person name="Dellagostin O.A."/>
            <person name="El-Dorry H."/>
            <person name="Ferro E.S."/>
            <person name="Ferro M.I.T."/>
            <person name="Furlan L.R."/>
            <person name="Gamberini M."/>
            <person name="Giglioti E.A."/>
            <person name="Goes-Neto A."/>
            <person name="Goldman G.H."/>
            <person name="Goldman M.H.S."/>
            <person name="Harakava R."/>
            <person name="Jeronimo S.M.B."/>
            <person name="Junqueira-de-Azevedo I.L.M."/>
            <person name="Kimura E.T."/>
            <person name="Kuramae E.E."/>
            <person name="Lemos E.G.M."/>
            <person name="Lemos M.V.F."/>
            <person name="Marino C.L."/>
            <person name="Nunes L.R."/>
            <person name="de Oliveira R.C."/>
            <person name="Pereira G.G."/>
            <person name="Reis M.S."/>
            <person name="Schriefer A."/>
            <person name="Siqueira W.J."/>
            <person name="Sommer P."/>
            <person name="Tsai S.M."/>
            <person name="Simpson A.J.G."/>
            <person name="Ferro J.A."/>
            <person name="Camargo L.E.A."/>
            <person name="Kitajima J.P."/>
            <person name="Setubal J.C."/>
            <person name="Van Sluys M.A."/>
        </authorList>
    </citation>
    <scope>NUCLEOTIDE SEQUENCE [LARGE SCALE GENOMIC DNA]</scope>
    <source>
        <strain>Fiocruz L1-130</strain>
    </source>
</reference>
<protein>
    <recommendedName>
        <fullName evidence="1">ATP synthase subunit b</fullName>
    </recommendedName>
    <alternativeName>
        <fullName evidence="1">ATP synthase F(0) sector subunit b</fullName>
    </alternativeName>
    <alternativeName>
        <fullName evidence="1">ATPase subunit I</fullName>
    </alternativeName>
    <alternativeName>
        <fullName evidence="1">F-type ATPase subunit b</fullName>
        <shortName evidence="1">F-ATPase subunit b</shortName>
    </alternativeName>
</protein>
<accession>Q72SY3</accession>
<gene>
    <name evidence="1" type="primary">atpF</name>
    <name type="ordered locus">LIC_11239</name>
</gene>
<feature type="chain" id="PRO_0000368563" description="ATP synthase subunit b">
    <location>
        <begin position="1"/>
        <end position="173"/>
    </location>
</feature>
<feature type="transmembrane region" description="Helical" evidence="1">
    <location>
        <begin position="12"/>
        <end position="32"/>
    </location>
</feature>
<sequence length="173" mass="19042">MVLLAAKGLSLLDVNPGLVVWTLVTFLVVVLVLKKFAWDVILKALDERAETVQNDIKKASELRLEAEALLKDYEARLNSAKDEANAIVAEAKSDALKLKNKLLEETNGEVKAQKDQAVKEIELAKAKALGQLQAQIVEMTITVAAKVLEKQLKSEDYKAFIETELDKLGKLSA</sequence>